<evidence type="ECO:0000250" key="1"/>
<evidence type="ECO:0000250" key="2">
    <source>
        <dbReference type="UniProtKB" id="O09009"/>
    </source>
</evidence>
<evidence type="ECO:0000255" key="3"/>
<evidence type="ECO:0000305" key="4"/>
<feature type="chain" id="PRO_0000219189" description="Beta-1,3-N-acetylglucosaminyltransferase radical fringe">
    <location>
        <begin position="1"/>
        <end position="396"/>
    </location>
</feature>
<feature type="topological domain" description="Cytoplasmic" evidence="3">
    <location>
        <begin position="1"/>
        <end position="6"/>
    </location>
</feature>
<feature type="transmembrane region" description="Helical; Signal-anchor for type II membrane protein" evidence="3">
    <location>
        <begin position="7"/>
        <end position="27"/>
    </location>
</feature>
<feature type="topological domain" description="Lumenal" evidence="3">
    <location>
        <begin position="28"/>
        <end position="396"/>
    </location>
</feature>
<feature type="active site" evidence="1">
    <location>
        <position position="307"/>
    </location>
</feature>
<feature type="binding site" evidence="1">
    <location>
        <position position="145"/>
    </location>
    <ligand>
        <name>substrate</name>
    </ligand>
</feature>
<feature type="binding site" evidence="1">
    <location>
        <position position="218"/>
    </location>
    <ligand>
        <name>substrate</name>
    </ligand>
</feature>
<feature type="binding site" evidence="1">
    <location>
        <position position="219"/>
    </location>
    <ligand>
        <name>Mn(2+)</name>
        <dbReference type="ChEBI" id="CHEBI:29035"/>
    </ligand>
</feature>
<feature type="binding site" evidence="1">
    <location>
        <position position="331"/>
    </location>
    <ligand>
        <name>Mn(2+)</name>
        <dbReference type="ChEBI" id="CHEBI:29035"/>
    </ligand>
</feature>
<feature type="glycosylation site" description="N-linked (GlcNAc...) asparagine" evidence="3">
    <location>
        <position position="49"/>
    </location>
</feature>
<feature type="glycosylation site" description="N-linked (GlcNAc...) asparagine" evidence="3">
    <location>
        <position position="120"/>
    </location>
</feature>
<feature type="glycosylation site" description="N-linked (GlcNAc...) asparagine" evidence="3">
    <location>
        <position position="184"/>
    </location>
</feature>
<feature type="disulfide bond" evidence="1">
    <location>
        <begin position="185"/>
        <end position="196"/>
    </location>
</feature>
<feature type="disulfide bond" evidence="1">
    <location>
        <begin position="214"/>
        <end position="277"/>
    </location>
</feature>
<feature type="disulfide bond" evidence="1">
    <location>
        <begin position="381"/>
        <end position="390"/>
    </location>
</feature>
<proteinExistence type="evidence at transcript level"/>
<comment type="function">
    <text evidence="1">Glycosyltransferase that initiates the elongation of O-linked fucose residues attached to EGF-like repeats in the extracellular domain of Notch molecules (By similarity). Involved in forelimb development and in adult forelimb regeneration.</text>
</comment>
<comment type="catalytic activity">
    <reaction evidence="2">
        <text>3-O-(alpha-L-fucosyl)-L-threonyl-[EGF-like domain protein] + UDP-N-acetyl-alpha-D-glucosamine = 3-O-(N-acetyl-beta-D-glucosaminyl-(1-&gt;3)-alpha-L-fucosyl)-L-threonyl-[EGF-like domain protein] + UDP + H(+)</text>
        <dbReference type="Rhea" id="RHEA:70531"/>
        <dbReference type="Rhea" id="RHEA-COMP:17922"/>
        <dbReference type="Rhea" id="RHEA-COMP:17923"/>
        <dbReference type="ChEBI" id="CHEBI:15378"/>
        <dbReference type="ChEBI" id="CHEBI:57705"/>
        <dbReference type="ChEBI" id="CHEBI:58223"/>
        <dbReference type="ChEBI" id="CHEBI:189631"/>
        <dbReference type="ChEBI" id="CHEBI:189634"/>
        <dbReference type="EC" id="2.4.1.222"/>
    </reaction>
</comment>
<comment type="catalytic activity">
    <reaction evidence="2">
        <text>3-O-(alpha-L-fucosyl)-L-seryl-[EGF-like domain protein] + UDP-N-acetyl-alpha-D-glucosamine = 3-O-(N-acetyl-beta-D-glucosaminyl-(1-&gt;3)-alpha-L-fucosyl)-L-seryl-[EGF-like domain protein] + UDP + H(+)</text>
        <dbReference type="Rhea" id="RHEA:70511"/>
        <dbReference type="Rhea" id="RHEA-COMP:17919"/>
        <dbReference type="Rhea" id="RHEA-COMP:17920"/>
        <dbReference type="ChEBI" id="CHEBI:15378"/>
        <dbReference type="ChEBI" id="CHEBI:57705"/>
        <dbReference type="ChEBI" id="CHEBI:58223"/>
        <dbReference type="ChEBI" id="CHEBI:189632"/>
        <dbReference type="ChEBI" id="CHEBI:189633"/>
        <dbReference type="EC" id="2.4.1.222"/>
    </reaction>
</comment>
<comment type="cofactor">
    <cofactor evidence="2">
        <name>Mn(2+)</name>
        <dbReference type="ChEBI" id="CHEBI:29035"/>
    </cofactor>
    <text evidence="2">Has some activity with cobalt but not with magnesium, calcium and zinc.</text>
</comment>
<comment type="subcellular location">
    <subcellularLocation>
        <location evidence="4">Golgi apparatus membrane</location>
        <topology evidence="4">Single-pass type II membrane protein</topology>
    </subcellularLocation>
</comment>
<comment type="tissue specificity">
    <text>Detected in the mesanchymal region of the developing limb. Expressed in mesoderm but not in ectoderm with no evident boundary of expression.</text>
</comment>
<comment type="developmental stage">
    <text>First detected in the presumptive limb field. As the limb develops from a limb bud into a cone, a stron homogeneous signal is evident. Strong expression persists as the cone flattens into a palette and digits begin to appear and is down-regulated as limb development advances. At the three digit stage there is a faint mesenchymal expression which disappears at the appearance of the fourth digit.</text>
</comment>
<comment type="similarity">
    <text evidence="4">Belongs to the glycosyltransferase 31 family.</text>
</comment>
<reference key="1">
    <citation type="journal article" date="1999" name="Dev. Dyn.">
        <title>Molecular cloning of the Notophthalmus viridescens radical fringe cDNA and characterization of its expression during forelimb development and adult forelimb regeneration.</title>
        <authorList>
            <person name="Cadinouche M.Z."/>
            <person name="Liversage R.A."/>
            <person name="Muller W."/>
            <person name="Tsilfidis C."/>
        </authorList>
    </citation>
    <scope>NUCLEOTIDE SEQUENCE [MRNA]</scope>
</reference>
<accession>Q9YHB3</accession>
<sequence>MNFSCLGLSKICFLVSVIFCTFLLLFIPKTKTPWRPRTYPQPRPPPLFNATCGKQFALPGIEHAQQKLPTHTTDITHFEDPGNVEDWRAYILGRENPDEKHEGPTDNPGEHKSVLASSINSSKDALEFEDLFIAVKTTRKYHKTRLDLLLQTWISRAKQQTFIFTDGEDQDLRQRAGIQVINTNCSAMHTRQALCCKMAVEYDKFIESERKWFCHVDDDNYVNLFSLRHLLASFSHSQDVYLGRPSLDHPIEAIERVKSDGSASVRFWFATGGAGFCISRGLALKMSPWASMGNFITTAELVRLPDDCTIGYIIEGLLGVKMHHTPLFHSHLENLQRLPLQSVLKQVTLSYGGPDNKRNVVSVGGIFSLENDPTRFRTVHCLLYPDTHWCPPRKTR</sequence>
<protein>
    <recommendedName>
        <fullName evidence="4">Beta-1,3-N-acetylglucosaminyltransferase radical fringe</fullName>
        <shortName>nrFng</shortName>
        <ecNumber evidence="2">2.4.1.222</ecNumber>
    </recommendedName>
    <alternativeName>
        <fullName>O-fucosylpeptide 3-beta-N-acetylglucosaminyltransferase</fullName>
    </alternativeName>
</protein>
<keyword id="KW-0217">Developmental protein</keyword>
<keyword id="KW-1015">Disulfide bond</keyword>
<keyword id="KW-0325">Glycoprotein</keyword>
<keyword id="KW-0328">Glycosyltransferase</keyword>
<keyword id="KW-0333">Golgi apparatus</keyword>
<keyword id="KW-0464">Manganese</keyword>
<keyword id="KW-0472">Membrane</keyword>
<keyword id="KW-0479">Metal-binding</keyword>
<keyword id="KW-0735">Signal-anchor</keyword>
<keyword id="KW-0808">Transferase</keyword>
<keyword id="KW-0812">Transmembrane</keyword>
<keyword id="KW-1133">Transmembrane helix</keyword>
<organism>
    <name type="scientific">Notophthalmus viridescens</name>
    <name type="common">Eastern newt</name>
    <name type="synonym">Triturus viridescens</name>
    <dbReference type="NCBI Taxonomy" id="8316"/>
    <lineage>
        <taxon>Eukaryota</taxon>
        <taxon>Metazoa</taxon>
        <taxon>Chordata</taxon>
        <taxon>Craniata</taxon>
        <taxon>Vertebrata</taxon>
        <taxon>Euteleostomi</taxon>
        <taxon>Amphibia</taxon>
        <taxon>Batrachia</taxon>
        <taxon>Caudata</taxon>
        <taxon>Salamandroidea</taxon>
        <taxon>Salamandridae</taxon>
        <taxon>Pleurodelinae</taxon>
        <taxon>Notophthalmus</taxon>
    </lineage>
</organism>
<dbReference type="EC" id="2.4.1.222" evidence="2"/>
<dbReference type="EMBL" id="AF115388">
    <property type="protein sequence ID" value="AAD10827.1"/>
    <property type="molecule type" value="mRNA"/>
</dbReference>
<dbReference type="SMR" id="Q9YHB3"/>
<dbReference type="CAZy" id="GT31">
    <property type="family name" value="Glycosyltransferase Family 31"/>
</dbReference>
<dbReference type="GlyCosmos" id="Q9YHB3">
    <property type="glycosylation" value="3 sites, No reported glycans"/>
</dbReference>
<dbReference type="GO" id="GO:0000139">
    <property type="term" value="C:Golgi membrane"/>
    <property type="evidence" value="ECO:0007669"/>
    <property type="project" value="UniProtKB-SubCell"/>
</dbReference>
<dbReference type="GO" id="GO:0046872">
    <property type="term" value="F:metal ion binding"/>
    <property type="evidence" value="ECO:0007669"/>
    <property type="project" value="UniProtKB-KW"/>
</dbReference>
<dbReference type="GO" id="GO:0033829">
    <property type="term" value="F:O-fucosylpeptide 3-beta-N-acetylglucosaminyltransferase activity"/>
    <property type="evidence" value="ECO:0007669"/>
    <property type="project" value="UniProtKB-EC"/>
</dbReference>
<dbReference type="FunFam" id="3.90.550.50:FF:000003">
    <property type="entry name" value="Beta-1,3-N-acetylglucosaminyltransferase"/>
    <property type="match status" value="1"/>
</dbReference>
<dbReference type="Gene3D" id="3.90.550.50">
    <property type="match status" value="1"/>
</dbReference>
<dbReference type="InterPro" id="IPR003378">
    <property type="entry name" value="Fringe-like_glycosylTrfase"/>
</dbReference>
<dbReference type="PANTHER" id="PTHR10811">
    <property type="entry name" value="FRINGE-RELATED"/>
    <property type="match status" value="1"/>
</dbReference>
<dbReference type="Pfam" id="PF02434">
    <property type="entry name" value="Fringe"/>
    <property type="match status" value="1"/>
</dbReference>
<gene>
    <name type="primary">RFNG</name>
</gene>
<name>RFNG_NOTVI</name>